<accession>B9JVN9</accession>
<sequence>MTDLRHYDVIVSPSITEKSTLVSDFNQVVFNVARTASKPEIKAAVEALFGVKVTAVNTLLRKGKTKRFRGFAGKQKDVKKAIVTLAEGQSIDVSTGL</sequence>
<organism>
    <name type="scientific">Allorhizobium ampelinum (strain ATCC BAA-846 / DSM 112012 / S4)</name>
    <name type="common">Agrobacterium vitis (strain S4)</name>
    <dbReference type="NCBI Taxonomy" id="311402"/>
    <lineage>
        <taxon>Bacteria</taxon>
        <taxon>Pseudomonadati</taxon>
        <taxon>Pseudomonadota</taxon>
        <taxon>Alphaproteobacteria</taxon>
        <taxon>Hyphomicrobiales</taxon>
        <taxon>Rhizobiaceae</taxon>
        <taxon>Rhizobium/Agrobacterium group</taxon>
        <taxon>Allorhizobium</taxon>
        <taxon>Allorhizobium ampelinum</taxon>
    </lineage>
</organism>
<keyword id="KW-1185">Reference proteome</keyword>
<keyword id="KW-0687">Ribonucleoprotein</keyword>
<keyword id="KW-0689">Ribosomal protein</keyword>
<keyword id="KW-0694">RNA-binding</keyword>
<keyword id="KW-0699">rRNA-binding</keyword>
<proteinExistence type="inferred from homology"/>
<comment type="function">
    <text evidence="1">One of the early assembly proteins it binds 23S rRNA. One of the proteins that surrounds the polypeptide exit tunnel on the outside of the ribosome. Forms the main docking site for trigger factor binding to the ribosome.</text>
</comment>
<comment type="subunit">
    <text evidence="1">Part of the 50S ribosomal subunit. Contacts protein L29, and trigger factor when it is bound to the ribosome.</text>
</comment>
<comment type="similarity">
    <text evidence="1">Belongs to the universal ribosomal protein uL23 family.</text>
</comment>
<dbReference type="EMBL" id="CP000633">
    <property type="protein sequence ID" value="ACM36319.1"/>
    <property type="molecule type" value="Genomic_DNA"/>
</dbReference>
<dbReference type="RefSeq" id="WP_015915740.1">
    <property type="nucleotide sequence ID" value="NC_011989.1"/>
</dbReference>
<dbReference type="SMR" id="B9JVN9"/>
<dbReference type="STRING" id="311402.Avi_1842"/>
<dbReference type="KEGG" id="avi:Avi_1842"/>
<dbReference type="eggNOG" id="COG0089">
    <property type="taxonomic scope" value="Bacteria"/>
</dbReference>
<dbReference type="HOGENOM" id="CLU_037562_3_1_5"/>
<dbReference type="Proteomes" id="UP000001596">
    <property type="component" value="Chromosome 1"/>
</dbReference>
<dbReference type="GO" id="GO:1990904">
    <property type="term" value="C:ribonucleoprotein complex"/>
    <property type="evidence" value="ECO:0007669"/>
    <property type="project" value="UniProtKB-KW"/>
</dbReference>
<dbReference type="GO" id="GO:0005840">
    <property type="term" value="C:ribosome"/>
    <property type="evidence" value="ECO:0007669"/>
    <property type="project" value="UniProtKB-KW"/>
</dbReference>
<dbReference type="GO" id="GO:0019843">
    <property type="term" value="F:rRNA binding"/>
    <property type="evidence" value="ECO:0007669"/>
    <property type="project" value="UniProtKB-UniRule"/>
</dbReference>
<dbReference type="GO" id="GO:0003735">
    <property type="term" value="F:structural constituent of ribosome"/>
    <property type="evidence" value="ECO:0007669"/>
    <property type="project" value="InterPro"/>
</dbReference>
<dbReference type="GO" id="GO:0006412">
    <property type="term" value="P:translation"/>
    <property type="evidence" value="ECO:0007669"/>
    <property type="project" value="UniProtKB-UniRule"/>
</dbReference>
<dbReference type="FunFam" id="3.30.70.330:FF:000001">
    <property type="entry name" value="50S ribosomal protein L23"/>
    <property type="match status" value="1"/>
</dbReference>
<dbReference type="Gene3D" id="3.30.70.330">
    <property type="match status" value="1"/>
</dbReference>
<dbReference type="HAMAP" id="MF_01369_B">
    <property type="entry name" value="Ribosomal_uL23_B"/>
    <property type="match status" value="1"/>
</dbReference>
<dbReference type="InterPro" id="IPR012677">
    <property type="entry name" value="Nucleotide-bd_a/b_plait_sf"/>
</dbReference>
<dbReference type="InterPro" id="IPR013025">
    <property type="entry name" value="Ribosomal_uL23-like"/>
</dbReference>
<dbReference type="InterPro" id="IPR012678">
    <property type="entry name" value="Ribosomal_uL23/eL15/eS24_sf"/>
</dbReference>
<dbReference type="NCBIfam" id="NF004359">
    <property type="entry name" value="PRK05738.1-3"/>
    <property type="match status" value="1"/>
</dbReference>
<dbReference type="NCBIfam" id="NF004360">
    <property type="entry name" value="PRK05738.1-5"/>
    <property type="match status" value="1"/>
</dbReference>
<dbReference type="NCBIfam" id="NF004363">
    <property type="entry name" value="PRK05738.2-4"/>
    <property type="match status" value="1"/>
</dbReference>
<dbReference type="PANTHER" id="PTHR11620">
    <property type="entry name" value="60S RIBOSOMAL PROTEIN L23A"/>
    <property type="match status" value="1"/>
</dbReference>
<dbReference type="Pfam" id="PF00276">
    <property type="entry name" value="Ribosomal_L23"/>
    <property type="match status" value="1"/>
</dbReference>
<dbReference type="SUPFAM" id="SSF54189">
    <property type="entry name" value="Ribosomal proteins S24e, L23 and L15e"/>
    <property type="match status" value="1"/>
</dbReference>
<evidence type="ECO:0000255" key="1">
    <source>
        <dbReference type="HAMAP-Rule" id="MF_01369"/>
    </source>
</evidence>
<evidence type="ECO:0000305" key="2"/>
<name>RL23_ALLAM</name>
<gene>
    <name evidence="1" type="primary">rplW</name>
    <name type="ordered locus">Avi_1842</name>
</gene>
<feature type="chain" id="PRO_1000184058" description="Large ribosomal subunit protein uL23">
    <location>
        <begin position="1"/>
        <end position="97"/>
    </location>
</feature>
<protein>
    <recommendedName>
        <fullName evidence="1">Large ribosomal subunit protein uL23</fullName>
    </recommendedName>
    <alternativeName>
        <fullName evidence="2">50S ribosomal protein L23</fullName>
    </alternativeName>
</protein>
<reference key="1">
    <citation type="journal article" date="2009" name="J. Bacteriol.">
        <title>Genome sequences of three Agrobacterium biovars help elucidate the evolution of multichromosome genomes in bacteria.</title>
        <authorList>
            <person name="Slater S.C."/>
            <person name="Goldman B.S."/>
            <person name="Goodner B."/>
            <person name="Setubal J.C."/>
            <person name="Farrand S.K."/>
            <person name="Nester E.W."/>
            <person name="Burr T.J."/>
            <person name="Banta L."/>
            <person name="Dickerman A.W."/>
            <person name="Paulsen I."/>
            <person name="Otten L."/>
            <person name="Suen G."/>
            <person name="Welch R."/>
            <person name="Almeida N.F."/>
            <person name="Arnold F."/>
            <person name="Burton O.T."/>
            <person name="Du Z."/>
            <person name="Ewing A."/>
            <person name="Godsy E."/>
            <person name="Heisel S."/>
            <person name="Houmiel K.L."/>
            <person name="Jhaveri J."/>
            <person name="Lu J."/>
            <person name="Miller N.M."/>
            <person name="Norton S."/>
            <person name="Chen Q."/>
            <person name="Phoolcharoen W."/>
            <person name="Ohlin V."/>
            <person name="Ondrusek D."/>
            <person name="Pride N."/>
            <person name="Stricklin S.L."/>
            <person name="Sun J."/>
            <person name="Wheeler C."/>
            <person name="Wilson L."/>
            <person name="Zhu H."/>
            <person name="Wood D.W."/>
        </authorList>
    </citation>
    <scope>NUCLEOTIDE SEQUENCE [LARGE SCALE GENOMIC DNA]</scope>
    <source>
        <strain>ATCC BAA-846 / DSM 112012 / S4</strain>
    </source>
</reference>